<proteinExistence type="inferred from homology"/>
<protein>
    <recommendedName>
        <fullName evidence="1">Phenylalanine--tRNA ligase beta subunit</fullName>
        <ecNumber evidence="1">6.1.1.20</ecNumber>
    </recommendedName>
    <alternativeName>
        <fullName evidence="1">Phenylalanyl-tRNA synthetase beta subunit</fullName>
        <shortName evidence="1">PheRS</shortName>
    </alternativeName>
</protein>
<gene>
    <name evidence="1" type="primary">pheT</name>
    <name type="ordered locus">Gmet_1416</name>
</gene>
<name>SYFB_GEOMG</name>
<keyword id="KW-0030">Aminoacyl-tRNA synthetase</keyword>
<keyword id="KW-0067">ATP-binding</keyword>
<keyword id="KW-0963">Cytoplasm</keyword>
<keyword id="KW-0436">Ligase</keyword>
<keyword id="KW-0460">Magnesium</keyword>
<keyword id="KW-0479">Metal-binding</keyword>
<keyword id="KW-0547">Nucleotide-binding</keyword>
<keyword id="KW-0648">Protein biosynthesis</keyword>
<keyword id="KW-1185">Reference proteome</keyword>
<keyword id="KW-0694">RNA-binding</keyword>
<keyword id="KW-0820">tRNA-binding</keyword>
<evidence type="ECO:0000255" key="1">
    <source>
        <dbReference type="HAMAP-Rule" id="MF_00283"/>
    </source>
</evidence>
<feature type="chain" id="PRO_0000232064" description="Phenylalanine--tRNA ligase beta subunit">
    <location>
        <begin position="1"/>
        <end position="801"/>
    </location>
</feature>
<feature type="domain" description="tRNA-binding" evidence="1">
    <location>
        <begin position="39"/>
        <end position="147"/>
    </location>
</feature>
<feature type="domain" description="B5" evidence="1">
    <location>
        <begin position="401"/>
        <end position="477"/>
    </location>
</feature>
<feature type="domain" description="FDX-ACB" evidence="1">
    <location>
        <begin position="708"/>
        <end position="801"/>
    </location>
</feature>
<feature type="binding site" evidence="1">
    <location>
        <position position="455"/>
    </location>
    <ligand>
        <name>Mg(2+)</name>
        <dbReference type="ChEBI" id="CHEBI:18420"/>
        <note>shared with alpha subunit</note>
    </ligand>
</feature>
<feature type="binding site" evidence="1">
    <location>
        <position position="461"/>
    </location>
    <ligand>
        <name>Mg(2+)</name>
        <dbReference type="ChEBI" id="CHEBI:18420"/>
        <note>shared with alpha subunit</note>
    </ligand>
</feature>
<feature type="binding site" evidence="1">
    <location>
        <position position="464"/>
    </location>
    <ligand>
        <name>Mg(2+)</name>
        <dbReference type="ChEBI" id="CHEBI:18420"/>
        <note>shared with alpha subunit</note>
    </ligand>
</feature>
<feature type="binding site" evidence="1">
    <location>
        <position position="465"/>
    </location>
    <ligand>
        <name>Mg(2+)</name>
        <dbReference type="ChEBI" id="CHEBI:18420"/>
        <note>shared with alpha subunit</note>
    </ligand>
</feature>
<reference key="1">
    <citation type="journal article" date="2009" name="BMC Microbiol.">
        <title>The genome sequence of Geobacter metallireducens: features of metabolism, physiology and regulation common and dissimilar to Geobacter sulfurreducens.</title>
        <authorList>
            <person name="Aklujkar M."/>
            <person name="Krushkal J."/>
            <person name="DiBartolo G."/>
            <person name="Lapidus A."/>
            <person name="Land M.L."/>
            <person name="Lovley D.R."/>
        </authorList>
    </citation>
    <scope>NUCLEOTIDE SEQUENCE [LARGE SCALE GENOMIC DNA]</scope>
    <source>
        <strain>ATCC 53774 / DSM 7210 / GS-15</strain>
    </source>
</reference>
<organism>
    <name type="scientific">Geobacter metallireducens (strain ATCC 53774 / DSM 7210 / GS-15)</name>
    <dbReference type="NCBI Taxonomy" id="269799"/>
    <lineage>
        <taxon>Bacteria</taxon>
        <taxon>Pseudomonadati</taxon>
        <taxon>Thermodesulfobacteriota</taxon>
        <taxon>Desulfuromonadia</taxon>
        <taxon>Geobacterales</taxon>
        <taxon>Geobacteraceae</taxon>
        <taxon>Geobacter</taxon>
    </lineage>
</organism>
<comment type="catalytic activity">
    <reaction evidence="1">
        <text>tRNA(Phe) + L-phenylalanine + ATP = L-phenylalanyl-tRNA(Phe) + AMP + diphosphate + H(+)</text>
        <dbReference type="Rhea" id="RHEA:19413"/>
        <dbReference type="Rhea" id="RHEA-COMP:9668"/>
        <dbReference type="Rhea" id="RHEA-COMP:9699"/>
        <dbReference type="ChEBI" id="CHEBI:15378"/>
        <dbReference type="ChEBI" id="CHEBI:30616"/>
        <dbReference type="ChEBI" id="CHEBI:33019"/>
        <dbReference type="ChEBI" id="CHEBI:58095"/>
        <dbReference type="ChEBI" id="CHEBI:78442"/>
        <dbReference type="ChEBI" id="CHEBI:78531"/>
        <dbReference type="ChEBI" id="CHEBI:456215"/>
        <dbReference type="EC" id="6.1.1.20"/>
    </reaction>
</comment>
<comment type="cofactor">
    <cofactor evidence="1">
        <name>Mg(2+)</name>
        <dbReference type="ChEBI" id="CHEBI:18420"/>
    </cofactor>
    <text evidence="1">Binds 2 magnesium ions per tetramer.</text>
</comment>
<comment type="subunit">
    <text evidence="1">Tetramer of two alpha and two beta subunits.</text>
</comment>
<comment type="subcellular location">
    <subcellularLocation>
        <location evidence="1">Cytoplasm</location>
    </subcellularLocation>
</comment>
<comment type="similarity">
    <text evidence="1">Belongs to the phenylalanyl-tRNA synthetase beta subunit family. Type 1 subfamily.</text>
</comment>
<accession>Q39VS4</accession>
<sequence length="801" mass="89219">MIVTYNWLKEFVDFDLSPQELSDLLTMLGLEVEGVRHVGGGLDEVVVAVVEERSQHPNADKLSLCRVNNGKETLAIVCGAQNFKAGDKVALAQIGAVLPGDFKIKRSKIRGEESCGMLCSEKELGLAAESEGIIILPTDLPLGVPVFDALGLKDTIFEIGLTPNRADCLSVVGIAREIAAKLGTTVKYARPSVKESVVPISERAQVIVEDSDLCPRYTARYIAGCSIGPSPAWLVRRLEAVGMRSINNVVDVTNYVLMEYGHPLHAFDADLLAGGKIVVRRAAAGERFTTLDGQERVLTESDLTIRDGEKGVALAGIMGGENSEIRQETSNILLESAYFNPSAIRRTSKRLGLHTESSHRFERGADVDILVTALDRAASLIAELAGGRVATGTIDVYPRPLPRRTVRFRVDQCNRLLGIQLTADEMAAIFNRLEFKVNVVEPELFDIDVPSCRVDIEREIDLVEEVARLNGYNNIPVTMPKARVFSDRPTRHQRLEKQLRNVMVGQGFSEVITFSFMAPGILDKLLLAHDDPRRSVVRLRNPLVEEQSVMRTTLLPGLLDVAARNINYRMLTLRLFELRRVYLPAEGQELPREPLHLAGIMTGVRYREGWNQERHQVDFYDVKGVIEHILDEFAIGSVVFVQDRLDPYFHPGKACSILCGNELLGSFGELHPDIHDNFGIDQSVYYLDLDFEKLAMVSSDNVAIKPPSRFPDTFRDIAMLIKDETPASTIVECISGLRIREVECAEIFDHYKGSHVPEGFKSIAVRIRYRSHERTLVDNEVTPLHQRIVDTLVKKLAVTIR</sequence>
<dbReference type="EC" id="6.1.1.20" evidence="1"/>
<dbReference type="EMBL" id="CP000148">
    <property type="protein sequence ID" value="ABB31650.1"/>
    <property type="molecule type" value="Genomic_DNA"/>
</dbReference>
<dbReference type="RefSeq" id="WP_004511651.1">
    <property type="nucleotide sequence ID" value="NC_007517.1"/>
</dbReference>
<dbReference type="SMR" id="Q39VS4"/>
<dbReference type="STRING" id="269799.Gmet_1416"/>
<dbReference type="KEGG" id="gme:Gmet_1416"/>
<dbReference type="eggNOG" id="COG0072">
    <property type="taxonomic scope" value="Bacteria"/>
</dbReference>
<dbReference type="eggNOG" id="COG0073">
    <property type="taxonomic scope" value="Bacteria"/>
</dbReference>
<dbReference type="HOGENOM" id="CLU_016891_0_0_7"/>
<dbReference type="Proteomes" id="UP000007073">
    <property type="component" value="Chromosome"/>
</dbReference>
<dbReference type="GO" id="GO:0009328">
    <property type="term" value="C:phenylalanine-tRNA ligase complex"/>
    <property type="evidence" value="ECO:0007669"/>
    <property type="project" value="TreeGrafter"/>
</dbReference>
<dbReference type="GO" id="GO:0005524">
    <property type="term" value="F:ATP binding"/>
    <property type="evidence" value="ECO:0007669"/>
    <property type="project" value="UniProtKB-UniRule"/>
</dbReference>
<dbReference type="GO" id="GO:0000287">
    <property type="term" value="F:magnesium ion binding"/>
    <property type="evidence" value="ECO:0007669"/>
    <property type="project" value="UniProtKB-UniRule"/>
</dbReference>
<dbReference type="GO" id="GO:0004826">
    <property type="term" value="F:phenylalanine-tRNA ligase activity"/>
    <property type="evidence" value="ECO:0007669"/>
    <property type="project" value="UniProtKB-UniRule"/>
</dbReference>
<dbReference type="GO" id="GO:0000049">
    <property type="term" value="F:tRNA binding"/>
    <property type="evidence" value="ECO:0007669"/>
    <property type="project" value="UniProtKB-KW"/>
</dbReference>
<dbReference type="GO" id="GO:0006432">
    <property type="term" value="P:phenylalanyl-tRNA aminoacylation"/>
    <property type="evidence" value="ECO:0007669"/>
    <property type="project" value="UniProtKB-UniRule"/>
</dbReference>
<dbReference type="CDD" id="cd00769">
    <property type="entry name" value="PheRS_beta_core"/>
    <property type="match status" value="1"/>
</dbReference>
<dbReference type="CDD" id="cd02796">
    <property type="entry name" value="tRNA_bind_bactPheRS"/>
    <property type="match status" value="1"/>
</dbReference>
<dbReference type="FunFam" id="2.40.50.140:FF:000045">
    <property type="entry name" value="Phenylalanine--tRNA ligase beta subunit"/>
    <property type="match status" value="1"/>
</dbReference>
<dbReference type="FunFam" id="3.30.56.10:FF:000002">
    <property type="entry name" value="Phenylalanine--tRNA ligase beta subunit"/>
    <property type="match status" value="1"/>
</dbReference>
<dbReference type="FunFam" id="3.30.930.10:FF:000022">
    <property type="entry name" value="Phenylalanine--tRNA ligase beta subunit"/>
    <property type="match status" value="1"/>
</dbReference>
<dbReference type="FunFam" id="3.50.40.10:FF:000001">
    <property type="entry name" value="Phenylalanine--tRNA ligase beta subunit"/>
    <property type="match status" value="1"/>
</dbReference>
<dbReference type="Gene3D" id="3.30.56.10">
    <property type="match status" value="2"/>
</dbReference>
<dbReference type="Gene3D" id="3.30.930.10">
    <property type="entry name" value="Bira Bifunctional Protein, Domain 2"/>
    <property type="match status" value="1"/>
</dbReference>
<dbReference type="Gene3D" id="3.30.70.380">
    <property type="entry name" value="Ferrodoxin-fold anticodon-binding domain"/>
    <property type="match status" value="1"/>
</dbReference>
<dbReference type="Gene3D" id="2.40.50.140">
    <property type="entry name" value="Nucleic acid-binding proteins"/>
    <property type="match status" value="1"/>
</dbReference>
<dbReference type="Gene3D" id="3.50.40.10">
    <property type="entry name" value="Phenylalanyl-trna Synthetase, Chain B, domain 3"/>
    <property type="match status" value="1"/>
</dbReference>
<dbReference type="HAMAP" id="MF_00283">
    <property type="entry name" value="Phe_tRNA_synth_beta1"/>
    <property type="match status" value="1"/>
</dbReference>
<dbReference type="InterPro" id="IPR045864">
    <property type="entry name" value="aa-tRNA-synth_II/BPL/LPL"/>
</dbReference>
<dbReference type="InterPro" id="IPR005146">
    <property type="entry name" value="B3/B4_tRNA-bd"/>
</dbReference>
<dbReference type="InterPro" id="IPR009061">
    <property type="entry name" value="DNA-bd_dom_put_sf"/>
</dbReference>
<dbReference type="InterPro" id="IPR005121">
    <property type="entry name" value="Fdx_antiC-bd"/>
</dbReference>
<dbReference type="InterPro" id="IPR036690">
    <property type="entry name" value="Fdx_antiC-bd_sf"/>
</dbReference>
<dbReference type="InterPro" id="IPR012340">
    <property type="entry name" value="NA-bd_OB-fold"/>
</dbReference>
<dbReference type="InterPro" id="IPR045060">
    <property type="entry name" value="Phe-tRNA-ligase_IIc_bsu"/>
</dbReference>
<dbReference type="InterPro" id="IPR004532">
    <property type="entry name" value="Phe-tRNA-ligase_IIc_bsu_bact"/>
</dbReference>
<dbReference type="InterPro" id="IPR020825">
    <property type="entry name" value="Phe-tRNA_synthase-like_B3/B4"/>
</dbReference>
<dbReference type="InterPro" id="IPR041616">
    <property type="entry name" value="PheRS_beta_core"/>
</dbReference>
<dbReference type="InterPro" id="IPR002547">
    <property type="entry name" value="tRNA-bd_dom"/>
</dbReference>
<dbReference type="InterPro" id="IPR033714">
    <property type="entry name" value="tRNA_bind_bactPheRS"/>
</dbReference>
<dbReference type="InterPro" id="IPR005147">
    <property type="entry name" value="tRNA_synthase_B5-dom"/>
</dbReference>
<dbReference type="NCBIfam" id="TIGR00472">
    <property type="entry name" value="pheT_bact"/>
    <property type="match status" value="1"/>
</dbReference>
<dbReference type="NCBIfam" id="NF045760">
    <property type="entry name" value="YtpR"/>
    <property type="match status" value="1"/>
</dbReference>
<dbReference type="PANTHER" id="PTHR10947:SF0">
    <property type="entry name" value="PHENYLALANINE--TRNA LIGASE BETA SUBUNIT"/>
    <property type="match status" value="1"/>
</dbReference>
<dbReference type="PANTHER" id="PTHR10947">
    <property type="entry name" value="PHENYLALANYL-TRNA SYNTHETASE BETA CHAIN AND LEUCINE-RICH REPEAT-CONTAINING PROTEIN 47"/>
    <property type="match status" value="1"/>
</dbReference>
<dbReference type="Pfam" id="PF03483">
    <property type="entry name" value="B3_4"/>
    <property type="match status" value="1"/>
</dbReference>
<dbReference type="Pfam" id="PF03484">
    <property type="entry name" value="B5"/>
    <property type="match status" value="1"/>
</dbReference>
<dbReference type="Pfam" id="PF03147">
    <property type="entry name" value="FDX-ACB"/>
    <property type="match status" value="1"/>
</dbReference>
<dbReference type="Pfam" id="PF01588">
    <property type="entry name" value="tRNA_bind"/>
    <property type="match status" value="1"/>
</dbReference>
<dbReference type="Pfam" id="PF17759">
    <property type="entry name" value="tRNA_synthFbeta"/>
    <property type="match status" value="1"/>
</dbReference>
<dbReference type="SMART" id="SM00873">
    <property type="entry name" value="B3_4"/>
    <property type="match status" value="1"/>
</dbReference>
<dbReference type="SMART" id="SM00874">
    <property type="entry name" value="B5"/>
    <property type="match status" value="1"/>
</dbReference>
<dbReference type="SMART" id="SM00896">
    <property type="entry name" value="FDX-ACB"/>
    <property type="match status" value="1"/>
</dbReference>
<dbReference type="SUPFAM" id="SSF54991">
    <property type="entry name" value="Anticodon-binding domain of PheRS"/>
    <property type="match status" value="1"/>
</dbReference>
<dbReference type="SUPFAM" id="SSF55681">
    <property type="entry name" value="Class II aaRS and biotin synthetases"/>
    <property type="match status" value="1"/>
</dbReference>
<dbReference type="SUPFAM" id="SSF50249">
    <property type="entry name" value="Nucleic acid-binding proteins"/>
    <property type="match status" value="1"/>
</dbReference>
<dbReference type="SUPFAM" id="SSF56037">
    <property type="entry name" value="PheT/TilS domain"/>
    <property type="match status" value="1"/>
</dbReference>
<dbReference type="SUPFAM" id="SSF46955">
    <property type="entry name" value="Putative DNA-binding domain"/>
    <property type="match status" value="1"/>
</dbReference>
<dbReference type="PROSITE" id="PS51483">
    <property type="entry name" value="B5"/>
    <property type="match status" value="1"/>
</dbReference>
<dbReference type="PROSITE" id="PS51447">
    <property type="entry name" value="FDX_ACB"/>
    <property type="match status" value="1"/>
</dbReference>
<dbReference type="PROSITE" id="PS50886">
    <property type="entry name" value="TRBD"/>
    <property type="match status" value="1"/>
</dbReference>